<comment type="subcellular location">
    <subcellularLocation>
        <location evidence="3">Host cell membrane</location>
        <topology evidence="3">Multi-pass membrane protein</topology>
    </subcellularLocation>
</comment>
<comment type="similarity">
    <text evidence="2">Belongs to the G-protein coupled receptor 1 family.</text>
</comment>
<protein>
    <recommendedName>
        <fullName>G-protein coupled receptor homolog FPV027</fullName>
    </recommendedName>
</protein>
<accession>Q9J5H4</accession>
<reference key="1">
    <citation type="journal article" date="2000" name="J. Virol.">
        <title>The genome of fowlpox virus.</title>
        <authorList>
            <person name="Afonso C.L."/>
            <person name="Tulman E.R."/>
            <person name="Lu Z."/>
            <person name="Zsak L."/>
            <person name="Kutish G.F."/>
            <person name="Rock D.L."/>
        </authorList>
    </citation>
    <scope>NUCLEOTIDE SEQUENCE [LARGE SCALE GENOMIC DNA]</scope>
</reference>
<dbReference type="EMBL" id="AF198100">
    <property type="protein sequence ID" value="AAF44371.1"/>
    <property type="molecule type" value="Genomic_DNA"/>
</dbReference>
<dbReference type="RefSeq" id="NP_038990.1">
    <property type="nucleotide sequence ID" value="NC_002188.1"/>
</dbReference>
<dbReference type="SMR" id="Q9J5H4"/>
<dbReference type="GeneID" id="1486746"/>
<dbReference type="KEGG" id="vg:1486746"/>
<dbReference type="Proteomes" id="UP000008597">
    <property type="component" value="Segment"/>
</dbReference>
<dbReference type="GO" id="GO:0020002">
    <property type="term" value="C:host cell plasma membrane"/>
    <property type="evidence" value="ECO:0007669"/>
    <property type="project" value="UniProtKB-SubCell"/>
</dbReference>
<dbReference type="GO" id="GO:0005886">
    <property type="term" value="C:plasma membrane"/>
    <property type="evidence" value="ECO:0007669"/>
    <property type="project" value="TreeGrafter"/>
</dbReference>
<dbReference type="GO" id="GO:0004875">
    <property type="term" value="F:complement receptor activity"/>
    <property type="evidence" value="ECO:0007669"/>
    <property type="project" value="TreeGrafter"/>
</dbReference>
<dbReference type="GO" id="GO:0004930">
    <property type="term" value="F:G protein-coupled receptor activity"/>
    <property type="evidence" value="ECO:0007669"/>
    <property type="project" value="UniProtKB-KW"/>
</dbReference>
<dbReference type="GO" id="GO:0007200">
    <property type="term" value="P:phospholipase C-activating G protein-coupled receptor signaling pathway"/>
    <property type="evidence" value="ECO:0007669"/>
    <property type="project" value="TreeGrafter"/>
</dbReference>
<dbReference type="GO" id="GO:0007204">
    <property type="term" value="P:positive regulation of cytosolic calcium ion concentration"/>
    <property type="evidence" value="ECO:0007669"/>
    <property type="project" value="TreeGrafter"/>
</dbReference>
<dbReference type="Gene3D" id="1.20.1070.10">
    <property type="entry name" value="Rhodopsin 7-helix transmembrane proteins"/>
    <property type="match status" value="1"/>
</dbReference>
<dbReference type="InterPro" id="IPR000248">
    <property type="entry name" value="ATII_rcpt"/>
</dbReference>
<dbReference type="InterPro" id="IPR000826">
    <property type="entry name" value="Formyl_rcpt-rel"/>
</dbReference>
<dbReference type="InterPro" id="IPR000276">
    <property type="entry name" value="GPCR_Rhodpsn"/>
</dbReference>
<dbReference type="InterPro" id="IPR017452">
    <property type="entry name" value="GPCR_Rhodpsn_7TM"/>
</dbReference>
<dbReference type="PANTHER" id="PTHR24225:SF74">
    <property type="entry name" value="CHEMOKINE-LIKE RECEPTOR 1"/>
    <property type="match status" value="1"/>
</dbReference>
<dbReference type="PANTHER" id="PTHR24225">
    <property type="entry name" value="CHEMOTACTIC RECEPTOR"/>
    <property type="match status" value="1"/>
</dbReference>
<dbReference type="Pfam" id="PF00001">
    <property type="entry name" value="7tm_1"/>
    <property type="match status" value="1"/>
</dbReference>
<dbReference type="PRINTS" id="PR00241">
    <property type="entry name" value="ANGIOTENSINR"/>
</dbReference>
<dbReference type="PRINTS" id="PR00237">
    <property type="entry name" value="GPCRRHODOPSN"/>
</dbReference>
<dbReference type="SUPFAM" id="SSF81321">
    <property type="entry name" value="Family A G protein-coupled receptor-like"/>
    <property type="match status" value="1"/>
</dbReference>
<dbReference type="PROSITE" id="PS50262">
    <property type="entry name" value="G_PROTEIN_RECEP_F1_2"/>
    <property type="match status" value="1"/>
</dbReference>
<sequence length="336" mass="38991">MSMNNITSKMNQDSYGYFQLHMSDFTRVSLSIVFTLVFLVGIIGNAVIIWFIGFKWTKTISTLLFINLALADSLFLIFIPVYTVYVLSNFHWYLGEFLCRVSSFFFTTNMYASMFLLTFISIDKYLTLTSHRLVYKYRKYRNYYVCIGAIWCISIALGVPTLYYKRVILSSSRNETRCISYYGDDKHTAITIYRIIVCIRFIIGYVFPMTVILLSYALIVYKVKFINKPPNRSFMITTASIFVFLACWTPHHVLNIISLYGLKSTSMYNYIKESIPFVNAIAFVYSAINPIIYIFVIRLTSTYDSDTMDELRSALLDEETTSTEDCSDIEISDISR</sequence>
<evidence type="ECO:0000255" key="1"/>
<evidence type="ECO:0000255" key="2">
    <source>
        <dbReference type="PROSITE-ProRule" id="PRU00521"/>
    </source>
</evidence>
<evidence type="ECO:0000305" key="3"/>
<keyword id="KW-1015">Disulfide bond</keyword>
<keyword id="KW-0297">G-protein coupled receptor</keyword>
<keyword id="KW-0325">Glycoprotein</keyword>
<keyword id="KW-1032">Host cell membrane</keyword>
<keyword id="KW-1043">Host membrane</keyword>
<keyword id="KW-0472">Membrane</keyword>
<keyword id="KW-0675">Receptor</keyword>
<keyword id="KW-1185">Reference proteome</keyword>
<keyword id="KW-0807">Transducer</keyword>
<keyword id="KW-0812">Transmembrane</keyword>
<keyword id="KW-1133">Transmembrane helix</keyword>
<feature type="chain" id="PRO_0000070249" description="G-protein coupled receptor homolog FPV027">
    <location>
        <begin position="1"/>
        <end position="336"/>
    </location>
</feature>
<feature type="topological domain" description="Extracellular" evidence="1">
    <location>
        <begin position="1"/>
        <end position="31"/>
    </location>
</feature>
<feature type="transmembrane region" description="Helical; Name=1" evidence="1">
    <location>
        <begin position="32"/>
        <end position="52"/>
    </location>
</feature>
<feature type="topological domain" description="Cytoplasmic" evidence="1">
    <location>
        <begin position="53"/>
        <end position="63"/>
    </location>
</feature>
<feature type="transmembrane region" description="Helical; Name=2" evidence="1">
    <location>
        <begin position="64"/>
        <end position="84"/>
    </location>
</feature>
<feature type="topological domain" description="Extracellular" evidence="1">
    <location>
        <begin position="85"/>
        <end position="101"/>
    </location>
</feature>
<feature type="transmembrane region" description="Helical; Name=3" evidence="1">
    <location>
        <begin position="102"/>
        <end position="122"/>
    </location>
</feature>
<feature type="topological domain" description="Cytoplasmic" evidence="1">
    <location>
        <begin position="123"/>
        <end position="143"/>
    </location>
</feature>
<feature type="transmembrane region" description="Helical; Name=4" evidence="1">
    <location>
        <begin position="144"/>
        <end position="164"/>
    </location>
</feature>
<feature type="topological domain" description="Extracellular" evidence="1">
    <location>
        <begin position="165"/>
        <end position="200"/>
    </location>
</feature>
<feature type="transmembrane region" description="Helical; Name=5" evidence="1">
    <location>
        <begin position="201"/>
        <end position="221"/>
    </location>
</feature>
<feature type="topological domain" description="Cytoplasmic" evidence="1">
    <location>
        <begin position="222"/>
        <end position="240"/>
    </location>
</feature>
<feature type="transmembrane region" description="Helical; Name=6" evidence="1">
    <location>
        <begin position="241"/>
        <end position="261"/>
    </location>
</feature>
<feature type="topological domain" description="Extracellular" evidence="1">
    <location>
        <begin position="262"/>
        <end position="276"/>
    </location>
</feature>
<feature type="transmembrane region" description="Helical; Name=7" evidence="1">
    <location>
        <begin position="277"/>
        <end position="297"/>
    </location>
</feature>
<feature type="topological domain" description="Cytoplasmic" evidence="1">
    <location>
        <begin position="298"/>
        <end position="336"/>
    </location>
</feature>
<feature type="glycosylation site" description="N-linked (GlcNAc...) asparagine; by host" evidence="1">
    <location>
        <position position="5"/>
    </location>
</feature>
<feature type="glycosylation site" description="N-linked (GlcNAc...) asparagine; by host" evidence="1">
    <location>
        <position position="174"/>
    </location>
</feature>
<feature type="disulfide bond" evidence="2">
    <location>
        <begin position="99"/>
        <end position="178"/>
    </location>
</feature>
<organismHost>
    <name type="scientific">Vertebrata</name>
    <dbReference type="NCBI Taxonomy" id="7742"/>
</organismHost>
<gene>
    <name type="ordered locus">FPV027</name>
</gene>
<proteinExistence type="inferred from homology"/>
<name>V027_FOWPN</name>
<organism>
    <name type="scientific">Fowlpox virus (strain NVSL)</name>
    <name type="common">FPV</name>
    <dbReference type="NCBI Taxonomy" id="928301"/>
    <lineage>
        <taxon>Viruses</taxon>
        <taxon>Varidnaviria</taxon>
        <taxon>Bamfordvirae</taxon>
        <taxon>Nucleocytoviricota</taxon>
        <taxon>Pokkesviricetes</taxon>
        <taxon>Chitovirales</taxon>
        <taxon>Poxviridae</taxon>
        <taxon>Chordopoxvirinae</taxon>
        <taxon>Avipoxvirus</taxon>
        <taxon>Fowlpox virus</taxon>
    </lineage>
</organism>